<name>CYB_CHEMA</name>
<dbReference type="EMBL" id="U53570">
    <property type="protein sequence ID" value="AAC50521.1"/>
    <property type="molecule type" value="Genomic_DNA"/>
</dbReference>
<dbReference type="EMBL" id="AY441457">
    <property type="protein sequence ID" value="AAS00138.1"/>
    <property type="molecule type" value="Genomic_DNA"/>
</dbReference>
<dbReference type="SMR" id="Q34169"/>
<dbReference type="GO" id="GO:0005743">
    <property type="term" value="C:mitochondrial inner membrane"/>
    <property type="evidence" value="ECO:0007669"/>
    <property type="project" value="UniProtKB-SubCell"/>
</dbReference>
<dbReference type="GO" id="GO:0045275">
    <property type="term" value="C:respiratory chain complex III"/>
    <property type="evidence" value="ECO:0007669"/>
    <property type="project" value="InterPro"/>
</dbReference>
<dbReference type="GO" id="GO:0046872">
    <property type="term" value="F:metal ion binding"/>
    <property type="evidence" value="ECO:0007669"/>
    <property type="project" value="UniProtKB-KW"/>
</dbReference>
<dbReference type="GO" id="GO:0008121">
    <property type="term" value="F:ubiquinol-cytochrome-c reductase activity"/>
    <property type="evidence" value="ECO:0007669"/>
    <property type="project" value="InterPro"/>
</dbReference>
<dbReference type="GO" id="GO:0006122">
    <property type="term" value="P:mitochondrial electron transport, ubiquinol to cytochrome c"/>
    <property type="evidence" value="ECO:0007669"/>
    <property type="project" value="TreeGrafter"/>
</dbReference>
<dbReference type="CDD" id="cd00290">
    <property type="entry name" value="cytochrome_b_C"/>
    <property type="match status" value="1"/>
</dbReference>
<dbReference type="CDD" id="cd00284">
    <property type="entry name" value="Cytochrome_b_N"/>
    <property type="match status" value="1"/>
</dbReference>
<dbReference type="FunFam" id="1.20.810.10:FF:000002">
    <property type="entry name" value="Cytochrome b"/>
    <property type="match status" value="1"/>
</dbReference>
<dbReference type="Gene3D" id="1.20.810.10">
    <property type="entry name" value="Cytochrome Bc1 Complex, Chain C"/>
    <property type="match status" value="1"/>
</dbReference>
<dbReference type="InterPro" id="IPR005798">
    <property type="entry name" value="Cyt_b/b6_C"/>
</dbReference>
<dbReference type="InterPro" id="IPR036150">
    <property type="entry name" value="Cyt_b/b6_C_sf"/>
</dbReference>
<dbReference type="InterPro" id="IPR005797">
    <property type="entry name" value="Cyt_b/b6_N"/>
</dbReference>
<dbReference type="InterPro" id="IPR027387">
    <property type="entry name" value="Cytb/b6-like_sf"/>
</dbReference>
<dbReference type="InterPro" id="IPR030689">
    <property type="entry name" value="Cytochrome_b"/>
</dbReference>
<dbReference type="InterPro" id="IPR048260">
    <property type="entry name" value="Cytochrome_b_C_euk/bac"/>
</dbReference>
<dbReference type="InterPro" id="IPR048259">
    <property type="entry name" value="Cytochrome_b_N_euk/bac"/>
</dbReference>
<dbReference type="InterPro" id="IPR016174">
    <property type="entry name" value="Di-haem_cyt_TM"/>
</dbReference>
<dbReference type="PANTHER" id="PTHR19271">
    <property type="entry name" value="CYTOCHROME B"/>
    <property type="match status" value="1"/>
</dbReference>
<dbReference type="PANTHER" id="PTHR19271:SF16">
    <property type="entry name" value="CYTOCHROME B"/>
    <property type="match status" value="1"/>
</dbReference>
<dbReference type="Pfam" id="PF00032">
    <property type="entry name" value="Cytochrom_B_C"/>
    <property type="match status" value="1"/>
</dbReference>
<dbReference type="Pfam" id="PF00033">
    <property type="entry name" value="Cytochrome_B"/>
    <property type="match status" value="1"/>
</dbReference>
<dbReference type="PIRSF" id="PIRSF038885">
    <property type="entry name" value="COB"/>
    <property type="match status" value="1"/>
</dbReference>
<dbReference type="SUPFAM" id="SSF81648">
    <property type="entry name" value="a domain/subunit of cytochrome bc1 complex (Ubiquinol-cytochrome c reductase)"/>
    <property type="match status" value="1"/>
</dbReference>
<dbReference type="SUPFAM" id="SSF81342">
    <property type="entry name" value="Transmembrane di-heme cytochromes"/>
    <property type="match status" value="1"/>
</dbReference>
<dbReference type="PROSITE" id="PS51003">
    <property type="entry name" value="CYTB_CTER"/>
    <property type="match status" value="1"/>
</dbReference>
<dbReference type="PROSITE" id="PS51002">
    <property type="entry name" value="CYTB_NTER"/>
    <property type="match status" value="1"/>
</dbReference>
<evidence type="ECO:0000250" key="1"/>
<evidence type="ECO:0000250" key="2">
    <source>
        <dbReference type="UniProtKB" id="P00157"/>
    </source>
</evidence>
<evidence type="ECO:0000255" key="3">
    <source>
        <dbReference type="PROSITE-ProRule" id="PRU00967"/>
    </source>
</evidence>
<evidence type="ECO:0000255" key="4">
    <source>
        <dbReference type="PROSITE-ProRule" id="PRU00968"/>
    </source>
</evidence>
<evidence type="ECO:0000305" key="5"/>
<organism>
    <name type="scientific">Cheirogaleus major</name>
    <name type="common">Greater dwarf lemur</name>
    <dbReference type="NCBI Taxonomy" id="47177"/>
    <lineage>
        <taxon>Eukaryota</taxon>
        <taxon>Metazoa</taxon>
        <taxon>Chordata</taxon>
        <taxon>Craniata</taxon>
        <taxon>Vertebrata</taxon>
        <taxon>Euteleostomi</taxon>
        <taxon>Mammalia</taxon>
        <taxon>Eutheria</taxon>
        <taxon>Euarchontoglires</taxon>
        <taxon>Primates</taxon>
        <taxon>Strepsirrhini</taxon>
        <taxon>Lemuriformes</taxon>
        <taxon>Cheirogaleidae</taxon>
        <taxon>Cheirogaleus</taxon>
    </lineage>
</organism>
<gene>
    <name type="primary">MT-CYB</name>
    <name type="synonym">COB</name>
    <name type="synonym">CYTB</name>
    <name type="synonym">MTCYB</name>
</gene>
<feature type="chain" id="PRO_0000060773" description="Cytochrome b">
    <location>
        <begin position="1"/>
        <end position="379"/>
    </location>
</feature>
<feature type="transmembrane region" description="Helical" evidence="2">
    <location>
        <begin position="33"/>
        <end position="53"/>
    </location>
</feature>
<feature type="transmembrane region" description="Helical" evidence="2">
    <location>
        <begin position="77"/>
        <end position="98"/>
    </location>
</feature>
<feature type="transmembrane region" description="Helical" evidence="2">
    <location>
        <begin position="113"/>
        <end position="133"/>
    </location>
</feature>
<feature type="transmembrane region" description="Helical" evidence="2">
    <location>
        <begin position="178"/>
        <end position="198"/>
    </location>
</feature>
<feature type="transmembrane region" description="Helical" evidence="2">
    <location>
        <begin position="226"/>
        <end position="246"/>
    </location>
</feature>
<feature type="transmembrane region" description="Helical" evidence="2">
    <location>
        <begin position="288"/>
        <end position="308"/>
    </location>
</feature>
<feature type="transmembrane region" description="Helical" evidence="2">
    <location>
        <begin position="320"/>
        <end position="340"/>
    </location>
</feature>
<feature type="transmembrane region" description="Helical" evidence="2">
    <location>
        <begin position="347"/>
        <end position="367"/>
    </location>
</feature>
<feature type="binding site" description="axial binding residue" evidence="2">
    <location>
        <position position="83"/>
    </location>
    <ligand>
        <name>heme b</name>
        <dbReference type="ChEBI" id="CHEBI:60344"/>
        <label>b562</label>
    </ligand>
    <ligandPart>
        <name>Fe</name>
        <dbReference type="ChEBI" id="CHEBI:18248"/>
    </ligandPart>
</feature>
<feature type="binding site" description="axial binding residue" evidence="2">
    <location>
        <position position="97"/>
    </location>
    <ligand>
        <name>heme b</name>
        <dbReference type="ChEBI" id="CHEBI:60344"/>
        <label>b566</label>
    </ligand>
    <ligandPart>
        <name>Fe</name>
        <dbReference type="ChEBI" id="CHEBI:18248"/>
    </ligandPart>
</feature>
<feature type="binding site" description="axial binding residue" evidence="2">
    <location>
        <position position="182"/>
    </location>
    <ligand>
        <name>heme b</name>
        <dbReference type="ChEBI" id="CHEBI:60344"/>
        <label>b562</label>
    </ligand>
    <ligandPart>
        <name>Fe</name>
        <dbReference type="ChEBI" id="CHEBI:18248"/>
    </ligandPart>
</feature>
<feature type="binding site" description="axial binding residue" evidence="2">
    <location>
        <position position="196"/>
    </location>
    <ligand>
        <name>heme b</name>
        <dbReference type="ChEBI" id="CHEBI:60344"/>
        <label>b566</label>
    </ligand>
    <ligandPart>
        <name>Fe</name>
        <dbReference type="ChEBI" id="CHEBI:18248"/>
    </ligandPart>
</feature>
<feature type="binding site" evidence="2">
    <location>
        <position position="201"/>
    </location>
    <ligand>
        <name>a ubiquinone</name>
        <dbReference type="ChEBI" id="CHEBI:16389"/>
    </ligand>
</feature>
<feature type="sequence conflict" description="In Ref. 2; AAS00138." evidence="5" ref="2">
    <original>A</original>
    <variation>T</variation>
    <location>
        <position position="42"/>
    </location>
</feature>
<feature type="sequence conflict" description="In Ref. 2; AAS00138." evidence="5" ref="2">
    <original>D</original>
    <variation>N</variation>
    <location>
        <position position="72"/>
    </location>
</feature>
<feature type="sequence conflict" description="In Ref. 2; AAS00138." evidence="5" ref="2">
    <original>S</original>
    <variation>W</variation>
    <location>
        <position position="110"/>
    </location>
</feature>
<proteinExistence type="inferred from homology"/>
<sequence length="379" mass="42948">MTNIRKTHPLMKIMNSSFIDLPAPSNISSWWNFGSLLGACLAIQIITGLFLAMHYTADTTTAFSSVTHICRDVNHGWIIRYLHANGASMFFLCLFIHVGRGMYYGSFTMSETWNIGIILLFTVMATAFMGYVLPWGQMSFWGATVITNLLSAIPYIGTMMVEWIWGGFSVDKATLTRFFAFHFILPFIITALVMVHLLFLHETGSNNPLGTSSDSDKIPFHPYYTIKDLLGLLFLLILLMILVLFSPDLLGDPDNYTPANPLNTPPHIKPEWYFLFAYAILRSIPNKLGGVLALVMSILILAIIPMLQTTKQRSMMFRPFSQILFWILTADLFILTWIGGQPVEYPFITIGQMASILYFFLILIIMPTASLMENKMLKW</sequence>
<keyword id="KW-0249">Electron transport</keyword>
<keyword id="KW-0349">Heme</keyword>
<keyword id="KW-0408">Iron</keyword>
<keyword id="KW-0472">Membrane</keyword>
<keyword id="KW-0479">Metal-binding</keyword>
<keyword id="KW-0496">Mitochondrion</keyword>
<keyword id="KW-0999">Mitochondrion inner membrane</keyword>
<keyword id="KW-0679">Respiratory chain</keyword>
<keyword id="KW-0812">Transmembrane</keyword>
<keyword id="KW-1133">Transmembrane helix</keyword>
<keyword id="KW-0813">Transport</keyword>
<keyword id="KW-0830">Ubiquinone</keyword>
<geneLocation type="mitochondrion"/>
<reference key="1">
    <citation type="journal article" date="1996" name="Proc. Natl. Acad. Sci. U.S.A.">
        <title>Ancient single origin for Malagasy primates.</title>
        <authorList>
            <person name="Yoder A.D."/>
            <person name="Cartmill M."/>
            <person name="Ruvolo M."/>
            <person name="Smith K."/>
            <person name="Vilgalys R."/>
        </authorList>
    </citation>
    <scope>NUCLEOTIDE SEQUENCE [GENOMIC DNA]</scope>
</reference>
<reference key="2">
    <citation type="submission" date="2003-10" db="EMBL/GenBank/DDBJ databases">
        <title>61 primate SINEs and the evolution of strepsirrhines.</title>
        <authorList>
            <person name="Roos C."/>
            <person name="Schmitz J."/>
            <person name="Zischler H."/>
        </authorList>
    </citation>
    <scope>NUCLEOTIDE SEQUENCE [GENOMIC DNA]</scope>
</reference>
<accession>Q34169</accession>
<accession>Q5VJ56</accession>
<protein>
    <recommendedName>
        <fullName>Cytochrome b</fullName>
    </recommendedName>
    <alternativeName>
        <fullName>Complex III subunit 3</fullName>
    </alternativeName>
    <alternativeName>
        <fullName>Complex III subunit III</fullName>
    </alternativeName>
    <alternativeName>
        <fullName>Cytochrome b-c1 complex subunit 3</fullName>
    </alternativeName>
    <alternativeName>
        <fullName>Ubiquinol-cytochrome-c reductase complex cytochrome b subunit</fullName>
    </alternativeName>
</protein>
<comment type="function">
    <text evidence="2">Component of the ubiquinol-cytochrome c reductase complex (complex III or cytochrome b-c1 complex) that is part of the mitochondrial respiratory chain. The b-c1 complex mediates electron transfer from ubiquinol to cytochrome c. Contributes to the generation of a proton gradient across the mitochondrial membrane that is then used for ATP synthesis.</text>
</comment>
<comment type="cofactor">
    <cofactor evidence="2">
        <name>heme b</name>
        <dbReference type="ChEBI" id="CHEBI:60344"/>
    </cofactor>
    <text evidence="2">Binds 2 heme b groups non-covalently.</text>
</comment>
<comment type="subunit">
    <text evidence="2">The cytochrome bc1 complex contains 11 subunits: 3 respiratory subunits (MT-CYB, CYC1 and UQCRFS1), 2 core proteins (UQCRC1 and UQCRC2) and 6 low-molecular weight proteins (UQCRH/QCR6, UQCRB/QCR7, UQCRQ/QCR8, UQCR10/QCR9, UQCR11/QCR10 and a cleavage product of UQCRFS1). This cytochrome bc1 complex then forms a dimer.</text>
</comment>
<comment type="subcellular location">
    <subcellularLocation>
        <location evidence="2">Mitochondrion inner membrane</location>
        <topology evidence="2">Multi-pass membrane protein</topology>
    </subcellularLocation>
</comment>
<comment type="miscellaneous">
    <text evidence="1">Heme 1 (or BL or b562) is low-potential and absorbs at about 562 nm, and heme 2 (or BH or b566) is high-potential and absorbs at about 566 nm.</text>
</comment>
<comment type="similarity">
    <text evidence="3 4">Belongs to the cytochrome b family.</text>
</comment>
<comment type="caution">
    <text evidence="2">The full-length protein contains only eight transmembrane helices, not nine as predicted by bioinformatics tools.</text>
</comment>